<feature type="chain" id="PRO_0000104203" description="Protein transport protein Sec61 gamma-2 subunit">
    <location>
        <begin position="1"/>
        <end position="68"/>
    </location>
</feature>
<feature type="topological domain" description="Cytoplasmic" evidence="2">
    <location>
        <begin position="1"/>
        <end position="32"/>
    </location>
</feature>
<feature type="transmembrane region" description="Helical" evidence="2">
    <location>
        <begin position="33"/>
        <end position="61"/>
    </location>
</feature>
<feature type="topological domain" description="Extracellular" evidence="2">
    <location>
        <begin position="62"/>
        <end position="68"/>
    </location>
</feature>
<proteinExistence type="inferred from homology"/>
<name>S61G2_DROME</name>
<reference key="1">
    <citation type="journal article" date="2000" name="Science">
        <title>The genome sequence of Drosophila melanogaster.</title>
        <authorList>
            <person name="Adams M.D."/>
            <person name="Celniker S.E."/>
            <person name="Holt R.A."/>
            <person name="Evans C.A."/>
            <person name="Gocayne J.D."/>
            <person name="Amanatides P.G."/>
            <person name="Scherer S.E."/>
            <person name="Li P.W."/>
            <person name="Hoskins R.A."/>
            <person name="Galle R.F."/>
            <person name="George R.A."/>
            <person name="Lewis S.E."/>
            <person name="Richards S."/>
            <person name="Ashburner M."/>
            <person name="Henderson S.N."/>
            <person name="Sutton G.G."/>
            <person name="Wortman J.R."/>
            <person name="Yandell M.D."/>
            <person name="Zhang Q."/>
            <person name="Chen L.X."/>
            <person name="Brandon R.C."/>
            <person name="Rogers Y.-H.C."/>
            <person name="Blazej R.G."/>
            <person name="Champe M."/>
            <person name="Pfeiffer B.D."/>
            <person name="Wan K.H."/>
            <person name="Doyle C."/>
            <person name="Baxter E.G."/>
            <person name="Helt G."/>
            <person name="Nelson C.R."/>
            <person name="Miklos G.L.G."/>
            <person name="Abril J.F."/>
            <person name="Agbayani A."/>
            <person name="An H.-J."/>
            <person name="Andrews-Pfannkoch C."/>
            <person name="Baldwin D."/>
            <person name="Ballew R.M."/>
            <person name="Basu A."/>
            <person name="Baxendale J."/>
            <person name="Bayraktaroglu L."/>
            <person name="Beasley E.M."/>
            <person name="Beeson K.Y."/>
            <person name="Benos P.V."/>
            <person name="Berman B.P."/>
            <person name="Bhandari D."/>
            <person name="Bolshakov S."/>
            <person name="Borkova D."/>
            <person name="Botchan M.R."/>
            <person name="Bouck J."/>
            <person name="Brokstein P."/>
            <person name="Brottier P."/>
            <person name="Burtis K.C."/>
            <person name="Busam D.A."/>
            <person name="Butler H."/>
            <person name="Cadieu E."/>
            <person name="Center A."/>
            <person name="Chandra I."/>
            <person name="Cherry J.M."/>
            <person name="Cawley S."/>
            <person name="Dahlke C."/>
            <person name="Davenport L.B."/>
            <person name="Davies P."/>
            <person name="de Pablos B."/>
            <person name="Delcher A."/>
            <person name="Deng Z."/>
            <person name="Mays A.D."/>
            <person name="Dew I."/>
            <person name="Dietz S.M."/>
            <person name="Dodson K."/>
            <person name="Doup L.E."/>
            <person name="Downes M."/>
            <person name="Dugan-Rocha S."/>
            <person name="Dunkov B.C."/>
            <person name="Dunn P."/>
            <person name="Durbin K.J."/>
            <person name="Evangelista C.C."/>
            <person name="Ferraz C."/>
            <person name="Ferriera S."/>
            <person name="Fleischmann W."/>
            <person name="Fosler C."/>
            <person name="Gabrielian A.E."/>
            <person name="Garg N.S."/>
            <person name="Gelbart W.M."/>
            <person name="Glasser K."/>
            <person name="Glodek A."/>
            <person name="Gong F."/>
            <person name="Gorrell J.H."/>
            <person name="Gu Z."/>
            <person name="Guan P."/>
            <person name="Harris M."/>
            <person name="Harris N.L."/>
            <person name="Harvey D.A."/>
            <person name="Heiman T.J."/>
            <person name="Hernandez J.R."/>
            <person name="Houck J."/>
            <person name="Hostin D."/>
            <person name="Houston K.A."/>
            <person name="Howland T.J."/>
            <person name="Wei M.-H."/>
            <person name="Ibegwam C."/>
            <person name="Jalali M."/>
            <person name="Kalush F."/>
            <person name="Karpen G.H."/>
            <person name="Ke Z."/>
            <person name="Kennison J.A."/>
            <person name="Ketchum K.A."/>
            <person name="Kimmel B.E."/>
            <person name="Kodira C.D."/>
            <person name="Kraft C.L."/>
            <person name="Kravitz S."/>
            <person name="Kulp D."/>
            <person name="Lai Z."/>
            <person name="Lasko P."/>
            <person name="Lei Y."/>
            <person name="Levitsky A.A."/>
            <person name="Li J.H."/>
            <person name="Li Z."/>
            <person name="Liang Y."/>
            <person name="Lin X."/>
            <person name="Liu X."/>
            <person name="Mattei B."/>
            <person name="McIntosh T.C."/>
            <person name="McLeod M.P."/>
            <person name="McPherson D."/>
            <person name="Merkulov G."/>
            <person name="Milshina N.V."/>
            <person name="Mobarry C."/>
            <person name="Morris J."/>
            <person name="Moshrefi A."/>
            <person name="Mount S.M."/>
            <person name="Moy M."/>
            <person name="Murphy B."/>
            <person name="Murphy L."/>
            <person name="Muzny D.M."/>
            <person name="Nelson D.L."/>
            <person name="Nelson D.R."/>
            <person name="Nelson K.A."/>
            <person name="Nixon K."/>
            <person name="Nusskern D.R."/>
            <person name="Pacleb J.M."/>
            <person name="Palazzolo M."/>
            <person name="Pittman G.S."/>
            <person name="Pan S."/>
            <person name="Pollard J."/>
            <person name="Puri V."/>
            <person name="Reese M.G."/>
            <person name="Reinert K."/>
            <person name="Remington K."/>
            <person name="Saunders R.D.C."/>
            <person name="Scheeler F."/>
            <person name="Shen H."/>
            <person name="Shue B.C."/>
            <person name="Siden-Kiamos I."/>
            <person name="Simpson M."/>
            <person name="Skupski M.P."/>
            <person name="Smith T.J."/>
            <person name="Spier E."/>
            <person name="Spradling A.C."/>
            <person name="Stapleton M."/>
            <person name="Strong R."/>
            <person name="Sun E."/>
            <person name="Svirskas R."/>
            <person name="Tector C."/>
            <person name="Turner R."/>
            <person name="Venter E."/>
            <person name="Wang A.H."/>
            <person name="Wang X."/>
            <person name="Wang Z.-Y."/>
            <person name="Wassarman D.A."/>
            <person name="Weinstock G.M."/>
            <person name="Weissenbach J."/>
            <person name="Williams S.M."/>
            <person name="Woodage T."/>
            <person name="Worley K.C."/>
            <person name="Wu D."/>
            <person name="Yang S."/>
            <person name="Yao Q.A."/>
            <person name="Ye J."/>
            <person name="Yeh R.-F."/>
            <person name="Zaveri J.S."/>
            <person name="Zhan M."/>
            <person name="Zhang G."/>
            <person name="Zhao Q."/>
            <person name="Zheng L."/>
            <person name="Zheng X.H."/>
            <person name="Zhong F.N."/>
            <person name="Zhong W."/>
            <person name="Zhou X."/>
            <person name="Zhu S.C."/>
            <person name="Zhu X."/>
            <person name="Smith H.O."/>
            <person name="Gibbs R.A."/>
            <person name="Myers E.W."/>
            <person name="Rubin G.M."/>
            <person name="Venter J.C."/>
        </authorList>
    </citation>
    <scope>NUCLEOTIDE SEQUENCE [LARGE SCALE GENOMIC DNA]</scope>
    <source>
        <strain>Berkeley</strain>
    </source>
</reference>
<reference key="2">
    <citation type="journal article" date="2002" name="Genome Biol.">
        <title>Annotation of the Drosophila melanogaster euchromatic genome: a systematic review.</title>
        <authorList>
            <person name="Misra S."/>
            <person name="Crosby M.A."/>
            <person name="Mungall C.J."/>
            <person name="Matthews B.B."/>
            <person name="Campbell K.S."/>
            <person name="Hradecky P."/>
            <person name="Huang Y."/>
            <person name="Kaminker J.S."/>
            <person name="Millburn G.H."/>
            <person name="Prochnik S.E."/>
            <person name="Smith C.D."/>
            <person name="Tupy J.L."/>
            <person name="Whitfield E.J."/>
            <person name="Bayraktaroglu L."/>
            <person name="Berman B.P."/>
            <person name="Bettencourt B.R."/>
            <person name="Celniker S.E."/>
            <person name="de Grey A.D.N.J."/>
            <person name="Drysdale R.A."/>
            <person name="Harris N.L."/>
            <person name="Richter J."/>
            <person name="Russo S."/>
            <person name="Schroeder A.J."/>
            <person name="Shu S.Q."/>
            <person name="Stapleton M."/>
            <person name="Yamada C."/>
            <person name="Ashburner M."/>
            <person name="Gelbart W.M."/>
            <person name="Rubin G.M."/>
            <person name="Lewis S.E."/>
        </authorList>
    </citation>
    <scope>GENOME REANNOTATION</scope>
    <source>
        <strain>Berkeley</strain>
    </source>
</reference>
<reference key="3">
    <citation type="journal article" date="2002" name="Genome Biol.">
        <title>A Drosophila full-length cDNA resource.</title>
        <authorList>
            <person name="Stapleton M."/>
            <person name="Carlson J.W."/>
            <person name="Brokstein P."/>
            <person name="Yu C."/>
            <person name="Champe M."/>
            <person name="George R.A."/>
            <person name="Guarin H."/>
            <person name="Kronmiller B."/>
            <person name="Pacleb J.M."/>
            <person name="Park S."/>
            <person name="Wan K.H."/>
            <person name="Rubin G.M."/>
            <person name="Celniker S.E."/>
        </authorList>
    </citation>
    <scope>NUCLEOTIDE SEQUENCE [LARGE SCALE MRNA]</scope>
    <source>
        <strain>Berkeley</strain>
        <tissue>Embryo</tissue>
    </source>
</reference>
<gene>
    <name type="primary">Sec61gamma</name>
    <name type="synonym">SEC61G2</name>
    <name type="ORF">CG14214</name>
</gene>
<evidence type="ECO:0000250" key="1"/>
<evidence type="ECO:0000255" key="2"/>
<evidence type="ECO:0000305" key="3"/>
<dbReference type="EMBL" id="AE014298">
    <property type="protein sequence ID" value="AAF48993.1"/>
    <property type="molecule type" value="Genomic_DNA"/>
</dbReference>
<dbReference type="EMBL" id="AY070594">
    <property type="protein sequence ID" value="AAL48065.1"/>
    <property type="molecule type" value="mRNA"/>
</dbReference>
<dbReference type="RefSeq" id="NP_001285450.1">
    <property type="nucleotide sequence ID" value="NM_001298521.1"/>
</dbReference>
<dbReference type="RefSeq" id="NP_001285451.1">
    <property type="nucleotide sequence ID" value="NM_001298522.1"/>
</dbReference>
<dbReference type="RefSeq" id="NP_608337.1">
    <property type="nucleotide sequence ID" value="NM_134493.3"/>
</dbReference>
<dbReference type="SMR" id="Q9VWE9"/>
<dbReference type="BioGRID" id="59264">
    <property type="interactions" value="11"/>
</dbReference>
<dbReference type="ComplexPortal" id="CPX-2650">
    <property type="entry name" value="SEC61 translocon complex, SEC61G2 variant"/>
</dbReference>
<dbReference type="FunCoup" id="Q9VWE9">
    <property type="interactions" value="896"/>
</dbReference>
<dbReference type="IntAct" id="Q9VWE9">
    <property type="interactions" value="9"/>
</dbReference>
<dbReference type="STRING" id="7227.FBpp0309475"/>
<dbReference type="PaxDb" id="7227-FBpp0074514"/>
<dbReference type="DNASU" id="32968"/>
<dbReference type="EnsemblMetazoa" id="FBtr0074745">
    <property type="protein sequence ID" value="FBpp0074514"/>
    <property type="gene ID" value="FBgn0031049"/>
</dbReference>
<dbReference type="EnsemblMetazoa" id="FBtr0340610">
    <property type="protein sequence ID" value="FBpp0309475"/>
    <property type="gene ID" value="FBgn0031049"/>
</dbReference>
<dbReference type="EnsemblMetazoa" id="FBtr0344986">
    <property type="protein sequence ID" value="FBpp0311240"/>
    <property type="gene ID" value="FBgn0031049"/>
</dbReference>
<dbReference type="GeneID" id="32968"/>
<dbReference type="KEGG" id="dme:Dmel_CG14214"/>
<dbReference type="UCSC" id="CG14214-RA">
    <property type="organism name" value="d. melanogaster"/>
</dbReference>
<dbReference type="AGR" id="FB:FBgn0031049"/>
<dbReference type="CTD" id="32968"/>
<dbReference type="FlyBase" id="FBgn0031049">
    <property type="gene designation" value="Sec61gamma"/>
</dbReference>
<dbReference type="VEuPathDB" id="VectorBase:FBgn0031049"/>
<dbReference type="eggNOG" id="KOG3498">
    <property type="taxonomic scope" value="Eukaryota"/>
</dbReference>
<dbReference type="HOGENOM" id="CLU_167752_2_0_1"/>
<dbReference type="InParanoid" id="Q9VWE9"/>
<dbReference type="OMA" id="FATEYYA"/>
<dbReference type="OrthoDB" id="2401875at2759"/>
<dbReference type="PhylomeDB" id="Q9VWE9"/>
<dbReference type="Reactome" id="R-DME-9609523">
    <property type="pathway name" value="Insertion of tail-anchored proteins into the endoplasmic reticulum membrane"/>
</dbReference>
<dbReference type="BioGRID-ORCS" id="32968">
    <property type="hits" value="0 hits in 1 CRISPR screen"/>
</dbReference>
<dbReference type="ChiTaRS" id="Sec61gamma">
    <property type="organism name" value="fly"/>
</dbReference>
<dbReference type="GenomeRNAi" id="32968"/>
<dbReference type="PRO" id="PR:Q9VWE9"/>
<dbReference type="Proteomes" id="UP000000803">
    <property type="component" value="Chromosome X"/>
</dbReference>
<dbReference type="Bgee" id="FBgn0031049">
    <property type="expression patterns" value="Expressed in wing disc and 204 other cell types or tissues"/>
</dbReference>
<dbReference type="ExpressionAtlas" id="Q9VWE9">
    <property type="expression patterns" value="baseline and differential"/>
</dbReference>
<dbReference type="GO" id="GO:0005784">
    <property type="term" value="C:Sec61 translocon complex"/>
    <property type="evidence" value="ECO:0000250"/>
    <property type="project" value="FlyBase"/>
</dbReference>
<dbReference type="GO" id="GO:0071261">
    <property type="term" value="C:Ssh1 translocon complex"/>
    <property type="evidence" value="ECO:0000318"/>
    <property type="project" value="GO_Central"/>
</dbReference>
<dbReference type="GO" id="GO:0008320">
    <property type="term" value="F:protein transmembrane transporter activity"/>
    <property type="evidence" value="ECO:0000318"/>
    <property type="project" value="GO_Central"/>
</dbReference>
<dbReference type="GO" id="GO:0010507">
    <property type="term" value="P:negative regulation of autophagy"/>
    <property type="evidence" value="ECO:0000315"/>
    <property type="project" value="FlyBase"/>
</dbReference>
<dbReference type="GO" id="GO:0031204">
    <property type="term" value="P:post-translational protein targeting to membrane, translocation"/>
    <property type="evidence" value="ECO:0000318"/>
    <property type="project" value="GO_Central"/>
</dbReference>
<dbReference type="GO" id="GO:0006616">
    <property type="term" value="P:SRP-dependent cotranslational protein targeting to membrane, translocation"/>
    <property type="evidence" value="ECO:0000250"/>
    <property type="project" value="FlyBase"/>
</dbReference>
<dbReference type="FunFam" id="1.20.5.820:FF:000001">
    <property type="entry name" value="Transport protein Sec61 subunit gamma"/>
    <property type="match status" value="1"/>
</dbReference>
<dbReference type="Gene3D" id="1.20.5.820">
    <property type="entry name" value="Preprotein translocase SecE subunit"/>
    <property type="match status" value="1"/>
</dbReference>
<dbReference type="HAMAP" id="MF_00422">
    <property type="entry name" value="SecE"/>
    <property type="match status" value="1"/>
</dbReference>
<dbReference type="InterPro" id="IPR023391">
    <property type="entry name" value="Prot_translocase_SecE_dom_sf"/>
</dbReference>
<dbReference type="InterPro" id="IPR008158">
    <property type="entry name" value="Translocase_Sec61-g"/>
</dbReference>
<dbReference type="InterPro" id="IPR001901">
    <property type="entry name" value="Translocase_SecE/Sec61-g"/>
</dbReference>
<dbReference type="NCBIfam" id="TIGR00327">
    <property type="entry name" value="secE_euk_arch"/>
    <property type="match status" value="1"/>
</dbReference>
<dbReference type="PANTHER" id="PTHR12309">
    <property type="entry name" value="SEC61 GAMMA SUBUNIT"/>
    <property type="match status" value="1"/>
</dbReference>
<dbReference type="Pfam" id="PF00584">
    <property type="entry name" value="SecE"/>
    <property type="match status" value="1"/>
</dbReference>
<dbReference type="SUPFAM" id="SSF103456">
    <property type="entry name" value="Preprotein translocase SecE subunit"/>
    <property type="match status" value="1"/>
</dbReference>
<dbReference type="PROSITE" id="PS01067">
    <property type="entry name" value="SECE_SEC61G"/>
    <property type="match status" value="1"/>
</dbReference>
<organism>
    <name type="scientific">Drosophila melanogaster</name>
    <name type="common">Fruit fly</name>
    <dbReference type="NCBI Taxonomy" id="7227"/>
    <lineage>
        <taxon>Eukaryota</taxon>
        <taxon>Metazoa</taxon>
        <taxon>Ecdysozoa</taxon>
        <taxon>Arthropoda</taxon>
        <taxon>Hexapoda</taxon>
        <taxon>Insecta</taxon>
        <taxon>Pterygota</taxon>
        <taxon>Neoptera</taxon>
        <taxon>Endopterygota</taxon>
        <taxon>Diptera</taxon>
        <taxon>Brachycera</taxon>
        <taxon>Muscomorpha</taxon>
        <taxon>Ephydroidea</taxon>
        <taxon>Drosophilidae</taxon>
        <taxon>Drosophila</taxon>
        <taxon>Sophophora</taxon>
    </lineage>
</organism>
<sequence length="68" mass="7596">MDKVVKFAEPGRAFAKDSIRLVKRCTKPDRKEFQKIAIATAVGFCIMGFIGFFVKLIHIPINNIIVGS</sequence>
<accession>Q9VWE9</accession>
<comment type="function">
    <text evidence="1">Necessary for protein translocation in the endoplasmic reticulum.</text>
</comment>
<comment type="subunit">
    <text evidence="1">Heterotrimeric complex composed of SEC61-alpha, SEC61-beta and SEC61-gamma.</text>
</comment>
<comment type="subcellular location">
    <subcellularLocation>
        <location evidence="3">Endoplasmic reticulum membrane</location>
        <topology evidence="3">Single-pass membrane protein</topology>
    </subcellularLocation>
</comment>
<comment type="similarity">
    <text evidence="3">Belongs to the SecE/SEC61-gamma family.</text>
</comment>
<protein>
    <recommendedName>
        <fullName>Protein transport protein Sec61 gamma-2 subunit</fullName>
    </recommendedName>
</protein>
<keyword id="KW-0256">Endoplasmic reticulum</keyword>
<keyword id="KW-0472">Membrane</keyword>
<keyword id="KW-0653">Protein transport</keyword>
<keyword id="KW-1185">Reference proteome</keyword>
<keyword id="KW-0811">Translocation</keyword>
<keyword id="KW-0812">Transmembrane</keyword>
<keyword id="KW-1133">Transmembrane helix</keyword>
<keyword id="KW-0813">Transport</keyword>